<proteinExistence type="inferred from homology"/>
<gene>
    <name evidence="1" type="primary">acpS</name>
    <name type="ordered locus">Cagg_3236</name>
</gene>
<reference key="1">
    <citation type="submission" date="2008-12" db="EMBL/GenBank/DDBJ databases">
        <title>Complete sequence of Chloroflexus aggregans DSM 9485.</title>
        <authorList>
            <consortium name="US DOE Joint Genome Institute"/>
            <person name="Lucas S."/>
            <person name="Copeland A."/>
            <person name="Lapidus A."/>
            <person name="Glavina del Rio T."/>
            <person name="Dalin E."/>
            <person name="Tice H."/>
            <person name="Pitluck S."/>
            <person name="Foster B."/>
            <person name="Larimer F."/>
            <person name="Land M."/>
            <person name="Hauser L."/>
            <person name="Kyrpides N."/>
            <person name="Mikhailova N."/>
            <person name="Bryant D.A."/>
            <person name="Richardson P."/>
        </authorList>
    </citation>
    <scope>NUCLEOTIDE SEQUENCE [LARGE SCALE GENOMIC DNA]</scope>
    <source>
        <strain>MD-66 / DSM 9485</strain>
    </source>
</reference>
<sequence length="140" mass="15142">MLYHGVDLVEVRRIRQAVMRYGQRFLARVYTAAERADCEIAPQVMRYEALAARWAAKEACAKALGIGLRGLGAFTVDYPRAGLHDIEVVRDAAGRPTLHLSGVAAQTANALQIRALAVSLSHTDELAIASVVAWVDLSGV</sequence>
<keyword id="KW-0963">Cytoplasm</keyword>
<keyword id="KW-0275">Fatty acid biosynthesis</keyword>
<keyword id="KW-0276">Fatty acid metabolism</keyword>
<keyword id="KW-0444">Lipid biosynthesis</keyword>
<keyword id="KW-0443">Lipid metabolism</keyword>
<keyword id="KW-0460">Magnesium</keyword>
<keyword id="KW-0479">Metal-binding</keyword>
<keyword id="KW-0808">Transferase</keyword>
<dbReference type="EC" id="2.7.8.7" evidence="1"/>
<dbReference type="EMBL" id="CP001337">
    <property type="protein sequence ID" value="ACL26094.1"/>
    <property type="molecule type" value="Genomic_DNA"/>
</dbReference>
<dbReference type="RefSeq" id="WP_015941941.1">
    <property type="nucleotide sequence ID" value="NC_011831.1"/>
</dbReference>
<dbReference type="SMR" id="B8G840"/>
<dbReference type="STRING" id="326427.Cagg_3236"/>
<dbReference type="KEGG" id="cag:Cagg_3236"/>
<dbReference type="eggNOG" id="COG0736">
    <property type="taxonomic scope" value="Bacteria"/>
</dbReference>
<dbReference type="HOGENOM" id="CLU_089696_0_2_0"/>
<dbReference type="OrthoDB" id="517356at2"/>
<dbReference type="Proteomes" id="UP000002508">
    <property type="component" value="Chromosome"/>
</dbReference>
<dbReference type="GO" id="GO:0005737">
    <property type="term" value="C:cytoplasm"/>
    <property type="evidence" value="ECO:0007669"/>
    <property type="project" value="UniProtKB-SubCell"/>
</dbReference>
<dbReference type="GO" id="GO:0008897">
    <property type="term" value="F:holo-[acyl-carrier-protein] synthase activity"/>
    <property type="evidence" value="ECO:0007669"/>
    <property type="project" value="UniProtKB-UniRule"/>
</dbReference>
<dbReference type="GO" id="GO:0000287">
    <property type="term" value="F:magnesium ion binding"/>
    <property type="evidence" value="ECO:0007669"/>
    <property type="project" value="UniProtKB-UniRule"/>
</dbReference>
<dbReference type="GO" id="GO:0006633">
    <property type="term" value="P:fatty acid biosynthetic process"/>
    <property type="evidence" value="ECO:0007669"/>
    <property type="project" value="UniProtKB-UniRule"/>
</dbReference>
<dbReference type="Gene3D" id="3.90.470.20">
    <property type="entry name" value="4'-phosphopantetheinyl transferase domain"/>
    <property type="match status" value="1"/>
</dbReference>
<dbReference type="HAMAP" id="MF_00101">
    <property type="entry name" value="AcpS"/>
    <property type="match status" value="1"/>
</dbReference>
<dbReference type="InterPro" id="IPR008278">
    <property type="entry name" value="4-PPantetheinyl_Trfase_dom"/>
</dbReference>
<dbReference type="InterPro" id="IPR037143">
    <property type="entry name" value="4-PPantetheinyl_Trfase_dom_sf"/>
</dbReference>
<dbReference type="InterPro" id="IPR002582">
    <property type="entry name" value="ACPS"/>
</dbReference>
<dbReference type="InterPro" id="IPR004568">
    <property type="entry name" value="Ppantetheine-prot_Trfase_dom"/>
</dbReference>
<dbReference type="NCBIfam" id="TIGR00516">
    <property type="entry name" value="acpS"/>
    <property type="match status" value="1"/>
</dbReference>
<dbReference type="NCBIfam" id="TIGR00556">
    <property type="entry name" value="pantethn_trn"/>
    <property type="match status" value="1"/>
</dbReference>
<dbReference type="Pfam" id="PF01648">
    <property type="entry name" value="ACPS"/>
    <property type="match status" value="1"/>
</dbReference>
<dbReference type="SUPFAM" id="SSF56214">
    <property type="entry name" value="4'-phosphopantetheinyl transferase"/>
    <property type="match status" value="1"/>
</dbReference>
<name>ACPS_CHLAD</name>
<feature type="chain" id="PRO_1000118802" description="Holo-[acyl-carrier-protein] synthase">
    <location>
        <begin position="1"/>
        <end position="140"/>
    </location>
</feature>
<feature type="binding site" evidence="1">
    <location>
        <position position="7"/>
    </location>
    <ligand>
        <name>Mg(2+)</name>
        <dbReference type="ChEBI" id="CHEBI:18420"/>
    </ligand>
</feature>
<feature type="binding site" evidence="1">
    <location>
        <position position="58"/>
    </location>
    <ligand>
        <name>Mg(2+)</name>
        <dbReference type="ChEBI" id="CHEBI:18420"/>
    </ligand>
</feature>
<protein>
    <recommendedName>
        <fullName evidence="1">Holo-[acyl-carrier-protein] synthase</fullName>
        <shortName evidence="1">Holo-ACP synthase</shortName>
        <ecNumber evidence="1">2.7.8.7</ecNumber>
    </recommendedName>
    <alternativeName>
        <fullName evidence="1">4'-phosphopantetheinyl transferase AcpS</fullName>
    </alternativeName>
</protein>
<evidence type="ECO:0000255" key="1">
    <source>
        <dbReference type="HAMAP-Rule" id="MF_00101"/>
    </source>
</evidence>
<comment type="function">
    <text evidence="1">Transfers the 4'-phosphopantetheine moiety from coenzyme A to a Ser of acyl-carrier-protein.</text>
</comment>
<comment type="catalytic activity">
    <reaction evidence="1">
        <text>apo-[ACP] + CoA = holo-[ACP] + adenosine 3',5'-bisphosphate + H(+)</text>
        <dbReference type="Rhea" id="RHEA:12068"/>
        <dbReference type="Rhea" id="RHEA-COMP:9685"/>
        <dbReference type="Rhea" id="RHEA-COMP:9690"/>
        <dbReference type="ChEBI" id="CHEBI:15378"/>
        <dbReference type="ChEBI" id="CHEBI:29999"/>
        <dbReference type="ChEBI" id="CHEBI:57287"/>
        <dbReference type="ChEBI" id="CHEBI:58343"/>
        <dbReference type="ChEBI" id="CHEBI:64479"/>
        <dbReference type="EC" id="2.7.8.7"/>
    </reaction>
</comment>
<comment type="cofactor">
    <cofactor evidence="1">
        <name>Mg(2+)</name>
        <dbReference type="ChEBI" id="CHEBI:18420"/>
    </cofactor>
</comment>
<comment type="subcellular location">
    <subcellularLocation>
        <location evidence="1">Cytoplasm</location>
    </subcellularLocation>
</comment>
<comment type="similarity">
    <text evidence="1">Belongs to the P-Pant transferase superfamily. AcpS family.</text>
</comment>
<accession>B8G840</accession>
<organism>
    <name type="scientific">Chloroflexus aggregans (strain MD-66 / DSM 9485)</name>
    <dbReference type="NCBI Taxonomy" id="326427"/>
    <lineage>
        <taxon>Bacteria</taxon>
        <taxon>Bacillati</taxon>
        <taxon>Chloroflexota</taxon>
        <taxon>Chloroflexia</taxon>
        <taxon>Chloroflexales</taxon>
        <taxon>Chloroflexineae</taxon>
        <taxon>Chloroflexaceae</taxon>
        <taxon>Chloroflexus</taxon>
    </lineage>
</organism>